<gene>
    <name evidence="1" type="primary">hisD</name>
    <name type="ordered locus">Reut_A3111</name>
</gene>
<accession>Q46WL2</accession>
<proteinExistence type="inferred from homology"/>
<reference key="1">
    <citation type="journal article" date="2010" name="PLoS ONE">
        <title>The complete multipartite genome sequence of Cupriavidus necator JMP134, a versatile pollutant degrader.</title>
        <authorList>
            <person name="Lykidis A."/>
            <person name="Perez-Pantoja D."/>
            <person name="Ledger T."/>
            <person name="Mavromatis K."/>
            <person name="Anderson I.J."/>
            <person name="Ivanova N.N."/>
            <person name="Hooper S.D."/>
            <person name="Lapidus A."/>
            <person name="Lucas S."/>
            <person name="Gonzalez B."/>
            <person name="Kyrpides N.C."/>
        </authorList>
    </citation>
    <scope>NUCLEOTIDE SEQUENCE [LARGE SCALE GENOMIC DNA]</scope>
    <source>
        <strain>JMP134 / LMG 1197</strain>
    </source>
</reference>
<organism>
    <name type="scientific">Cupriavidus pinatubonensis (strain JMP 134 / LMG 1197)</name>
    <name type="common">Cupriavidus necator (strain JMP 134)</name>
    <dbReference type="NCBI Taxonomy" id="264198"/>
    <lineage>
        <taxon>Bacteria</taxon>
        <taxon>Pseudomonadati</taxon>
        <taxon>Pseudomonadota</taxon>
        <taxon>Betaproteobacteria</taxon>
        <taxon>Burkholderiales</taxon>
        <taxon>Burkholderiaceae</taxon>
        <taxon>Cupriavidus</taxon>
    </lineage>
</organism>
<comment type="function">
    <text evidence="1">Catalyzes the sequential NAD-dependent oxidations of L-histidinol to L-histidinaldehyde and then to L-histidine.</text>
</comment>
<comment type="catalytic activity">
    <reaction evidence="1">
        <text>L-histidinol + 2 NAD(+) + H2O = L-histidine + 2 NADH + 3 H(+)</text>
        <dbReference type="Rhea" id="RHEA:20641"/>
        <dbReference type="ChEBI" id="CHEBI:15377"/>
        <dbReference type="ChEBI" id="CHEBI:15378"/>
        <dbReference type="ChEBI" id="CHEBI:57540"/>
        <dbReference type="ChEBI" id="CHEBI:57595"/>
        <dbReference type="ChEBI" id="CHEBI:57699"/>
        <dbReference type="ChEBI" id="CHEBI:57945"/>
        <dbReference type="EC" id="1.1.1.23"/>
    </reaction>
</comment>
<comment type="cofactor">
    <cofactor evidence="1">
        <name>Zn(2+)</name>
        <dbReference type="ChEBI" id="CHEBI:29105"/>
    </cofactor>
    <text evidence="1">Binds 1 zinc ion per subunit.</text>
</comment>
<comment type="pathway">
    <text evidence="1">Amino-acid biosynthesis; L-histidine biosynthesis; L-histidine from 5-phospho-alpha-D-ribose 1-diphosphate: step 9/9.</text>
</comment>
<comment type="similarity">
    <text evidence="1">Belongs to the histidinol dehydrogenase family.</text>
</comment>
<dbReference type="EC" id="1.1.1.23" evidence="1"/>
<dbReference type="EMBL" id="CP000090">
    <property type="protein sequence ID" value="AAZ62471.1"/>
    <property type="molecule type" value="Genomic_DNA"/>
</dbReference>
<dbReference type="SMR" id="Q46WL2"/>
<dbReference type="STRING" id="264198.Reut_A3111"/>
<dbReference type="KEGG" id="reu:Reut_A3111"/>
<dbReference type="eggNOG" id="COG0141">
    <property type="taxonomic scope" value="Bacteria"/>
</dbReference>
<dbReference type="HOGENOM" id="CLU_006732_3_3_4"/>
<dbReference type="OrthoDB" id="9805269at2"/>
<dbReference type="UniPathway" id="UPA00031">
    <property type="reaction ID" value="UER00014"/>
</dbReference>
<dbReference type="GO" id="GO:0005829">
    <property type="term" value="C:cytosol"/>
    <property type="evidence" value="ECO:0007669"/>
    <property type="project" value="TreeGrafter"/>
</dbReference>
<dbReference type="GO" id="GO:0004399">
    <property type="term" value="F:histidinol dehydrogenase activity"/>
    <property type="evidence" value="ECO:0007669"/>
    <property type="project" value="UniProtKB-UniRule"/>
</dbReference>
<dbReference type="GO" id="GO:0051287">
    <property type="term" value="F:NAD binding"/>
    <property type="evidence" value="ECO:0007669"/>
    <property type="project" value="InterPro"/>
</dbReference>
<dbReference type="GO" id="GO:0008270">
    <property type="term" value="F:zinc ion binding"/>
    <property type="evidence" value="ECO:0007669"/>
    <property type="project" value="UniProtKB-UniRule"/>
</dbReference>
<dbReference type="GO" id="GO:0000105">
    <property type="term" value="P:L-histidine biosynthetic process"/>
    <property type="evidence" value="ECO:0007669"/>
    <property type="project" value="UniProtKB-UniRule"/>
</dbReference>
<dbReference type="CDD" id="cd06572">
    <property type="entry name" value="Histidinol_dh"/>
    <property type="match status" value="1"/>
</dbReference>
<dbReference type="FunFam" id="3.40.50.1980:FF:000001">
    <property type="entry name" value="Histidinol dehydrogenase"/>
    <property type="match status" value="1"/>
</dbReference>
<dbReference type="FunFam" id="3.40.50.1980:FF:000026">
    <property type="entry name" value="Histidinol dehydrogenase"/>
    <property type="match status" value="1"/>
</dbReference>
<dbReference type="Gene3D" id="1.20.5.1300">
    <property type="match status" value="1"/>
</dbReference>
<dbReference type="Gene3D" id="3.40.50.1980">
    <property type="entry name" value="Nitrogenase molybdenum iron protein domain"/>
    <property type="match status" value="2"/>
</dbReference>
<dbReference type="HAMAP" id="MF_01024">
    <property type="entry name" value="HisD"/>
    <property type="match status" value="1"/>
</dbReference>
<dbReference type="InterPro" id="IPR016161">
    <property type="entry name" value="Ald_DH/histidinol_DH"/>
</dbReference>
<dbReference type="InterPro" id="IPR001692">
    <property type="entry name" value="Histidinol_DH_CS"/>
</dbReference>
<dbReference type="InterPro" id="IPR022695">
    <property type="entry name" value="Histidinol_DH_monofunct"/>
</dbReference>
<dbReference type="InterPro" id="IPR012131">
    <property type="entry name" value="Hstdl_DH"/>
</dbReference>
<dbReference type="NCBIfam" id="TIGR00069">
    <property type="entry name" value="hisD"/>
    <property type="match status" value="1"/>
</dbReference>
<dbReference type="PANTHER" id="PTHR21256:SF2">
    <property type="entry name" value="HISTIDINE BIOSYNTHESIS TRIFUNCTIONAL PROTEIN"/>
    <property type="match status" value="1"/>
</dbReference>
<dbReference type="PANTHER" id="PTHR21256">
    <property type="entry name" value="HISTIDINOL DEHYDROGENASE HDH"/>
    <property type="match status" value="1"/>
</dbReference>
<dbReference type="Pfam" id="PF00815">
    <property type="entry name" value="Histidinol_dh"/>
    <property type="match status" value="1"/>
</dbReference>
<dbReference type="PIRSF" id="PIRSF000099">
    <property type="entry name" value="Histidinol_dh"/>
    <property type="match status" value="1"/>
</dbReference>
<dbReference type="PRINTS" id="PR00083">
    <property type="entry name" value="HOLDHDRGNASE"/>
</dbReference>
<dbReference type="SUPFAM" id="SSF53720">
    <property type="entry name" value="ALDH-like"/>
    <property type="match status" value="1"/>
</dbReference>
<dbReference type="PROSITE" id="PS00611">
    <property type="entry name" value="HISOL_DEHYDROGENASE"/>
    <property type="match status" value="1"/>
</dbReference>
<sequence length="445" mass="47888">MNATEMENVSIRRLDSSDPRFAQALREVLAFEAGEDEAIDRAVAQILADVKDRGDAAVLEYTQRFDRVEAASMGALEISQSELEAALEDLEPKRRAALEAAAARVRAYHEKQKIECGSHSWEYTEADGTMLGQKVTPLDRVGIYVPGGKAAYPSSVLMNAIPARVAGVKEIIMVVPTPGGVRNELVLAAAQIAGVDRVFTIGGAQAVGALAYGTATLPQVDKIVGPGNAYVAAAKRRVFGTVGIDMIAGPSEILVICDGTTDPDWVAMDLFSQAEHDELAQSILLCPDADYIAQVEASIQRQLDSMPRREVIAASISGRGALIKVRDMEEACEIANAIAPEHLEISAENPRQWSEKIRHAGAIFLGRYTSESLGDYCAGPNHVLPTSRTARFSSPLGVYDFQKRSSLIEVSEGGAQMLGQIAAELAYGEGLQAHARSAEYRFKRS</sequence>
<name>HISX_CUPPJ</name>
<keyword id="KW-0028">Amino-acid biosynthesis</keyword>
<keyword id="KW-0368">Histidine biosynthesis</keyword>
<keyword id="KW-0479">Metal-binding</keyword>
<keyword id="KW-0520">NAD</keyword>
<keyword id="KW-0560">Oxidoreductase</keyword>
<keyword id="KW-0862">Zinc</keyword>
<evidence type="ECO:0000255" key="1">
    <source>
        <dbReference type="HAMAP-Rule" id="MF_01024"/>
    </source>
</evidence>
<protein>
    <recommendedName>
        <fullName evidence="1">Histidinol dehydrogenase</fullName>
        <shortName evidence="1">HDH</shortName>
        <ecNumber evidence="1">1.1.1.23</ecNumber>
    </recommendedName>
</protein>
<feature type="chain" id="PRO_0000135826" description="Histidinol dehydrogenase">
    <location>
        <begin position="1"/>
        <end position="445"/>
    </location>
</feature>
<feature type="active site" description="Proton acceptor" evidence="1">
    <location>
        <position position="341"/>
    </location>
</feature>
<feature type="active site" description="Proton acceptor" evidence="1">
    <location>
        <position position="342"/>
    </location>
</feature>
<feature type="binding site" evidence="1">
    <location>
        <position position="144"/>
    </location>
    <ligand>
        <name>NAD(+)</name>
        <dbReference type="ChEBI" id="CHEBI:57540"/>
    </ligand>
</feature>
<feature type="binding site" evidence="1">
    <location>
        <position position="205"/>
    </location>
    <ligand>
        <name>NAD(+)</name>
        <dbReference type="ChEBI" id="CHEBI:57540"/>
    </ligand>
</feature>
<feature type="binding site" evidence="1">
    <location>
        <position position="228"/>
    </location>
    <ligand>
        <name>NAD(+)</name>
        <dbReference type="ChEBI" id="CHEBI:57540"/>
    </ligand>
</feature>
<feature type="binding site" evidence="1">
    <location>
        <position position="251"/>
    </location>
    <ligand>
        <name>substrate</name>
    </ligand>
</feature>
<feature type="binding site" evidence="1">
    <location>
        <position position="273"/>
    </location>
    <ligand>
        <name>substrate</name>
    </ligand>
</feature>
<feature type="binding site" evidence="1">
    <location>
        <position position="273"/>
    </location>
    <ligand>
        <name>Zn(2+)</name>
        <dbReference type="ChEBI" id="CHEBI:29105"/>
    </ligand>
</feature>
<feature type="binding site" evidence="1">
    <location>
        <position position="276"/>
    </location>
    <ligand>
        <name>substrate</name>
    </ligand>
</feature>
<feature type="binding site" evidence="1">
    <location>
        <position position="276"/>
    </location>
    <ligand>
        <name>Zn(2+)</name>
        <dbReference type="ChEBI" id="CHEBI:29105"/>
    </ligand>
</feature>
<feature type="binding site" evidence="1">
    <location>
        <position position="342"/>
    </location>
    <ligand>
        <name>substrate</name>
    </ligand>
</feature>
<feature type="binding site" evidence="1">
    <location>
        <position position="375"/>
    </location>
    <ligand>
        <name>substrate</name>
    </ligand>
</feature>
<feature type="binding site" evidence="1">
    <location>
        <position position="375"/>
    </location>
    <ligand>
        <name>Zn(2+)</name>
        <dbReference type="ChEBI" id="CHEBI:29105"/>
    </ligand>
</feature>
<feature type="binding site" evidence="1">
    <location>
        <position position="429"/>
    </location>
    <ligand>
        <name>substrate</name>
    </ligand>
</feature>
<feature type="binding site" evidence="1">
    <location>
        <position position="434"/>
    </location>
    <ligand>
        <name>substrate</name>
    </ligand>
</feature>
<feature type="binding site" evidence="1">
    <location>
        <position position="434"/>
    </location>
    <ligand>
        <name>Zn(2+)</name>
        <dbReference type="ChEBI" id="CHEBI:29105"/>
    </ligand>
</feature>